<accession>Q3Z7T4</accession>
<comment type="function">
    <text evidence="1">Binds directly to 23S rRNA. The L1 stalk is quite mobile in the ribosome, and is involved in E site tRNA release.</text>
</comment>
<comment type="function">
    <text evidence="1">Protein L1 is also a translational repressor protein, it controls the translation of the L11 operon by binding to its mRNA.</text>
</comment>
<comment type="subunit">
    <text evidence="1">Part of the 50S ribosomal subunit.</text>
</comment>
<comment type="similarity">
    <text evidence="1">Belongs to the universal ribosomal protein uL1 family.</text>
</comment>
<name>RL1_DEHM1</name>
<organism>
    <name type="scientific">Dehalococcoides mccartyi (strain ATCC BAA-2266 / KCTC 15142 / 195)</name>
    <name type="common">Dehalococcoides ethenogenes (strain 195)</name>
    <dbReference type="NCBI Taxonomy" id="243164"/>
    <lineage>
        <taxon>Bacteria</taxon>
        <taxon>Bacillati</taxon>
        <taxon>Chloroflexota</taxon>
        <taxon>Dehalococcoidia</taxon>
        <taxon>Dehalococcoidales</taxon>
        <taxon>Dehalococcoidaceae</taxon>
        <taxon>Dehalococcoides</taxon>
    </lineage>
</organism>
<proteinExistence type="inferred from homology"/>
<protein>
    <recommendedName>
        <fullName evidence="1">Large ribosomal subunit protein uL1</fullName>
    </recommendedName>
    <alternativeName>
        <fullName evidence="2">50S ribosomal protein L1</fullName>
    </alternativeName>
</protein>
<gene>
    <name evidence="1" type="primary">rplA</name>
    <name type="ordered locus">DET0992</name>
</gene>
<keyword id="KW-0678">Repressor</keyword>
<keyword id="KW-0687">Ribonucleoprotein</keyword>
<keyword id="KW-0689">Ribosomal protein</keyword>
<keyword id="KW-0694">RNA-binding</keyword>
<keyword id="KW-0699">rRNA-binding</keyword>
<keyword id="KW-0810">Translation regulation</keyword>
<keyword id="KW-0820">tRNA-binding</keyword>
<sequence>MVTRGKKYQDAIKLLDQSLAYAPAEAIDVAKKMAAAKFDETVEMHLKMGLDPKNATQQLRGVAVLPHGLGKTVRVLVFAQGEAEKAAQAAGADVYGGDELIKKVEAGFLDFDVAISTPDMMSKVGKLGKVLGRRGLMPNPKSGTVVPAEDFKQVIEEARKGRVEFKLDRSGIVHIILGKASFEGQALLENMTSVVDAIIRSKPTGAKGQYIKSAYLATTMGPGVKMDLRAVSAMGGA</sequence>
<evidence type="ECO:0000255" key="1">
    <source>
        <dbReference type="HAMAP-Rule" id="MF_01318"/>
    </source>
</evidence>
<evidence type="ECO:0000305" key="2"/>
<reference key="1">
    <citation type="journal article" date="2005" name="Science">
        <title>Genome sequence of the PCE-dechlorinating bacterium Dehalococcoides ethenogenes.</title>
        <authorList>
            <person name="Seshadri R."/>
            <person name="Adrian L."/>
            <person name="Fouts D.E."/>
            <person name="Eisen J.A."/>
            <person name="Phillippy A.M."/>
            <person name="Methe B.A."/>
            <person name="Ward N.L."/>
            <person name="Nelson W.C."/>
            <person name="DeBoy R.T."/>
            <person name="Khouri H.M."/>
            <person name="Kolonay J.F."/>
            <person name="Dodson R.J."/>
            <person name="Daugherty S.C."/>
            <person name="Brinkac L.M."/>
            <person name="Sullivan S.A."/>
            <person name="Madupu R."/>
            <person name="Nelson K.E."/>
            <person name="Kang K.H."/>
            <person name="Impraim M."/>
            <person name="Tran K."/>
            <person name="Robinson J.M."/>
            <person name="Forberger H.A."/>
            <person name="Fraser C.M."/>
            <person name="Zinder S.H."/>
            <person name="Heidelberg J.F."/>
        </authorList>
    </citation>
    <scope>NUCLEOTIDE SEQUENCE [LARGE SCALE GENOMIC DNA]</scope>
    <source>
        <strain>ATCC BAA-2266 / KCTC 15142 / 195</strain>
    </source>
</reference>
<feature type="chain" id="PRO_0000230605" description="Large ribosomal subunit protein uL1">
    <location>
        <begin position="1"/>
        <end position="237"/>
    </location>
</feature>
<dbReference type="EMBL" id="CP000027">
    <property type="protein sequence ID" value="AAW39782.1"/>
    <property type="molecule type" value="Genomic_DNA"/>
</dbReference>
<dbReference type="RefSeq" id="WP_010936694.1">
    <property type="nucleotide sequence ID" value="NC_002936.3"/>
</dbReference>
<dbReference type="SMR" id="Q3Z7T4"/>
<dbReference type="FunCoup" id="Q3Z7T4">
    <property type="interactions" value="396"/>
</dbReference>
<dbReference type="STRING" id="243164.DET0992"/>
<dbReference type="GeneID" id="3229744"/>
<dbReference type="KEGG" id="det:DET0992"/>
<dbReference type="eggNOG" id="COG0081">
    <property type="taxonomic scope" value="Bacteria"/>
</dbReference>
<dbReference type="HOGENOM" id="CLU_062853_0_0_0"/>
<dbReference type="InParanoid" id="Q3Z7T4"/>
<dbReference type="Proteomes" id="UP000008289">
    <property type="component" value="Chromosome"/>
</dbReference>
<dbReference type="GO" id="GO:0015934">
    <property type="term" value="C:large ribosomal subunit"/>
    <property type="evidence" value="ECO:0007669"/>
    <property type="project" value="InterPro"/>
</dbReference>
<dbReference type="GO" id="GO:0019843">
    <property type="term" value="F:rRNA binding"/>
    <property type="evidence" value="ECO:0007669"/>
    <property type="project" value="UniProtKB-UniRule"/>
</dbReference>
<dbReference type="GO" id="GO:0003735">
    <property type="term" value="F:structural constituent of ribosome"/>
    <property type="evidence" value="ECO:0007669"/>
    <property type="project" value="InterPro"/>
</dbReference>
<dbReference type="GO" id="GO:0000049">
    <property type="term" value="F:tRNA binding"/>
    <property type="evidence" value="ECO:0007669"/>
    <property type="project" value="UniProtKB-KW"/>
</dbReference>
<dbReference type="GO" id="GO:0006417">
    <property type="term" value="P:regulation of translation"/>
    <property type="evidence" value="ECO:0007669"/>
    <property type="project" value="UniProtKB-KW"/>
</dbReference>
<dbReference type="GO" id="GO:0006412">
    <property type="term" value="P:translation"/>
    <property type="evidence" value="ECO:0007669"/>
    <property type="project" value="UniProtKB-UniRule"/>
</dbReference>
<dbReference type="CDD" id="cd00403">
    <property type="entry name" value="Ribosomal_L1"/>
    <property type="match status" value="1"/>
</dbReference>
<dbReference type="FunFam" id="3.40.50.790:FF:000001">
    <property type="entry name" value="50S ribosomal protein L1"/>
    <property type="match status" value="1"/>
</dbReference>
<dbReference type="Gene3D" id="3.30.190.20">
    <property type="match status" value="1"/>
</dbReference>
<dbReference type="Gene3D" id="3.40.50.790">
    <property type="match status" value="1"/>
</dbReference>
<dbReference type="HAMAP" id="MF_01318_B">
    <property type="entry name" value="Ribosomal_uL1_B"/>
    <property type="match status" value="1"/>
</dbReference>
<dbReference type="InterPro" id="IPR005878">
    <property type="entry name" value="Ribosom_uL1_bac-type"/>
</dbReference>
<dbReference type="InterPro" id="IPR002143">
    <property type="entry name" value="Ribosomal_uL1"/>
</dbReference>
<dbReference type="InterPro" id="IPR023674">
    <property type="entry name" value="Ribosomal_uL1-like"/>
</dbReference>
<dbReference type="InterPro" id="IPR028364">
    <property type="entry name" value="Ribosomal_uL1/biogenesis"/>
</dbReference>
<dbReference type="InterPro" id="IPR016095">
    <property type="entry name" value="Ribosomal_uL1_3-a/b-sand"/>
</dbReference>
<dbReference type="InterPro" id="IPR023673">
    <property type="entry name" value="Ribosomal_uL1_CS"/>
</dbReference>
<dbReference type="NCBIfam" id="TIGR01169">
    <property type="entry name" value="rplA_bact"/>
    <property type="match status" value="1"/>
</dbReference>
<dbReference type="PANTHER" id="PTHR36427">
    <property type="entry name" value="54S RIBOSOMAL PROTEIN L1, MITOCHONDRIAL"/>
    <property type="match status" value="1"/>
</dbReference>
<dbReference type="PANTHER" id="PTHR36427:SF3">
    <property type="entry name" value="LARGE RIBOSOMAL SUBUNIT PROTEIN UL1M"/>
    <property type="match status" value="1"/>
</dbReference>
<dbReference type="Pfam" id="PF00687">
    <property type="entry name" value="Ribosomal_L1"/>
    <property type="match status" value="1"/>
</dbReference>
<dbReference type="PIRSF" id="PIRSF002155">
    <property type="entry name" value="Ribosomal_L1"/>
    <property type="match status" value="1"/>
</dbReference>
<dbReference type="SUPFAM" id="SSF56808">
    <property type="entry name" value="Ribosomal protein L1"/>
    <property type="match status" value="1"/>
</dbReference>
<dbReference type="PROSITE" id="PS01199">
    <property type="entry name" value="RIBOSOMAL_L1"/>
    <property type="match status" value="1"/>
</dbReference>